<comment type="function">
    <text evidence="1 4">Induces RNA cleavage activity in the RNA polymerase. Induces rapid cleavage of a stalled transcription elongation complex with a 2-nucleotide reduction at the 3' end of the nascent RNA. Truncated RNA is able to resume elongation. During transcription elongation it enhances processivity (PubMed:29203770). Involved in transcriptional proofreading and fidelity. Misincorporation of nucleotides during elongation of transcription leads to arrested elongation complexes which are rescued by TFS-promoted removal of a dinucleotide from the 3'-end. TFS1 is able to induce a cleavage resynthesis cycle in stalled elongation complexes (resulting from the next missing nucleotide or a reduced incorporation rate of a wrong nucleotide) preventing misincorporation and enabling proofreading in a post-incorporation manner. Pausing of elongation complexes is the main determinant of TFS-induced RNA cleavage (By similarity).</text>
</comment>
<comment type="cofactor">
    <cofactor evidence="8">
        <name>Zn(2+)</name>
        <dbReference type="ChEBI" id="CHEBI:29105"/>
    </cofactor>
    <text evidence="8">Binds 2 Zn(2+) ions.</text>
</comment>
<comment type="subunit">
    <text evidence="4">Interacts with RNA polymerase; probably competes with TFS4 for the same binding site.</text>
</comment>
<comment type="domain">
    <text evidence="4 8">Has 2 zinc-ribbon domains (N-ZR and C-ZR); functionally important residues Asp-94 and Glu-95 are probably located at the tip of a domain that extends from C-ZR into the RNAP active site. The nature of these residues determines if the protein is involved in stalled transcript cleavage and thus activation (Asp and Glu residues in this protein, TFS1) or in RNAP inhibition (Lys residues in TFS4).</text>
</comment>
<comment type="similarity">
    <text evidence="7">Belongs to the archaeal RpoM/eukaryotic RPA12/RPB9/RPC11 RNA polymerase family.</text>
</comment>
<proteinExistence type="evidence at protein level"/>
<protein>
    <recommendedName>
        <fullName evidence="6">Transcription factor S1</fullName>
        <shortName evidence="6">TFS1</shortName>
    </recommendedName>
    <alternativeName>
        <fullName evidence="6">Transcript cleavage factor TFS1</fullName>
    </alternativeName>
</protein>
<organism>
    <name type="scientific">Saccharolobus solfataricus (strain ATCC 35092 / DSM 1617 / JCM 11322 / P2)</name>
    <name type="common">Sulfolobus solfataricus</name>
    <dbReference type="NCBI Taxonomy" id="273057"/>
    <lineage>
        <taxon>Archaea</taxon>
        <taxon>Thermoproteota</taxon>
        <taxon>Thermoprotei</taxon>
        <taxon>Sulfolobales</taxon>
        <taxon>Sulfolobaceae</taxon>
        <taxon>Saccharolobus</taxon>
    </lineage>
</organism>
<gene>
    <name evidence="5" type="primary">tfs1</name>
    <name evidence="5" type="synonym">rpoM-1</name>
    <name type="ordered locus">SSO0291</name>
</gene>
<name>TFS1_SACS2</name>
<keyword id="KW-0010">Activator</keyword>
<keyword id="KW-0240">DNA-directed RNA polymerase</keyword>
<keyword id="KW-0479">Metal-binding</keyword>
<keyword id="KW-0548">Nucleotidyltransferase</keyword>
<keyword id="KW-1185">Reference proteome</keyword>
<keyword id="KW-0804">Transcription</keyword>
<keyword id="KW-0805">Transcription regulation</keyword>
<keyword id="KW-0808">Transferase</keyword>
<keyword id="KW-0862">Zinc</keyword>
<keyword id="KW-0863">Zinc-finger</keyword>
<accession>Q980K2</accession>
<sequence length="114" mass="13206">MIVVKFCPKCNSMMVPKKSNGKNVYRCTKCGYEKEVPETTIVVTSKVKHSIKEKTLVLEEEEMPSGAQKIKGVLCPSCKNDEAYFWILQTRRADEPPTRFYKCTKCGKVWREYE</sequence>
<feature type="chain" id="PRO_0000453929" description="Transcription factor S1">
    <location>
        <begin position="1"/>
        <end position="114"/>
    </location>
</feature>
<feature type="zinc finger region" description="TFIIS-type" evidence="2">
    <location>
        <begin position="71"/>
        <end position="111"/>
    </location>
</feature>
<feature type="region of interest" description="N-ZR" evidence="8">
    <location>
        <begin position="1"/>
        <end position="43"/>
    </location>
</feature>
<feature type="region of interest" description="C-ZR" evidence="8">
    <location>
        <begin position="63"/>
        <end position="114"/>
    </location>
</feature>
<feature type="active site" evidence="4">
    <location>
        <position position="94"/>
    </location>
</feature>
<feature type="active site" evidence="4">
    <location>
        <position position="95"/>
    </location>
</feature>
<feature type="binding site" evidence="3 8">
    <location>
        <position position="7"/>
    </location>
    <ligand>
        <name>Zn(2+)</name>
        <dbReference type="ChEBI" id="CHEBI:29105"/>
        <label>1</label>
    </ligand>
</feature>
<feature type="binding site" evidence="3 8">
    <location>
        <position position="10"/>
    </location>
    <ligand>
        <name>Zn(2+)</name>
        <dbReference type="ChEBI" id="CHEBI:29105"/>
        <label>1</label>
    </ligand>
</feature>
<feature type="binding site" evidence="3 8">
    <location>
        <position position="27"/>
    </location>
    <ligand>
        <name>Zn(2+)</name>
        <dbReference type="ChEBI" id="CHEBI:29105"/>
        <label>1</label>
    </ligand>
</feature>
<feature type="binding site" evidence="3 8">
    <location>
        <position position="30"/>
    </location>
    <ligand>
        <name>Zn(2+)</name>
        <dbReference type="ChEBI" id="CHEBI:29105"/>
        <label>1</label>
    </ligand>
</feature>
<feature type="binding site" evidence="2 8">
    <location>
        <position position="75"/>
    </location>
    <ligand>
        <name>Zn(2+)</name>
        <dbReference type="ChEBI" id="CHEBI:29105"/>
        <label>2</label>
    </ligand>
</feature>
<feature type="binding site" evidence="2 8">
    <location>
        <position position="78"/>
    </location>
    <ligand>
        <name>Zn(2+)</name>
        <dbReference type="ChEBI" id="CHEBI:29105"/>
        <label>2</label>
    </ligand>
</feature>
<feature type="binding site" evidence="2 8">
    <location>
        <position position="103"/>
    </location>
    <ligand>
        <name>Zn(2+)</name>
        <dbReference type="ChEBI" id="CHEBI:29105"/>
        <label>2</label>
    </ligand>
</feature>
<feature type="binding site" evidence="2 8">
    <location>
        <position position="106"/>
    </location>
    <ligand>
        <name>Zn(2+)</name>
        <dbReference type="ChEBI" id="CHEBI:29105"/>
        <label>2</label>
    </ligand>
</feature>
<feature type="mutagenesis site" description="Inhibits RNAP activity, destabilizes pre-initiation complex and inhibits transcription initiation (TFS1-tip4, with active tip of TFS4)." evidence="4">
    <original>YFWILQTRRADEPPT</original>
    <variation>ILLNKKK</variation>
    <location>
        <begin position="84"/>
        <end position="98"/>
    </location>
</feature>
<feature type="mutagenesis site" description="Loss of RNA cleavage activity, reduces transcription processivity." evidence="4">
    <original>DE</original>
    <variation>AA</variation>
    <location>
        <begin position="94"/>
        <end position="95"/>
    </location>
</feature>
<evidence type="ECO:0000250" key="1">
    <source>
        <dbReference type="UniProtKB" id="Q9P9I8"/>
    </source>
</evidence>
<evidence type="ECO:0000255" key="2">
    <source>
        <dbReference type="PROSITE-ProRule" id="PRU00472"/>
    </source>
</evidence>
<evidence type="ECO:0000255" key="3">
    <source>
        <dbReference type="PROSITE-ProRule" id="PRU10145"/>
    </source>
</evidence>
<evidence type="ECO:0000269" key="4">
    <source>
    </source>
</evidence>
<evidence type="ECO:0000303" key="5">
    <source>
    </source>
</evidence>
<evidence type="ECO:0000303" key="6">
    <source>
    </source>
</evidence>
<evidence type="ECO:0000305" key="7"/>
<evidence type="ECO:0000305" key="8">
    <source>
    </source>
</evidence>
<dbReference type="EMBL" id="AE006641">
    <property type="protein sequence ID" value="AAK40629.1"/>
    <property type="molecule type" value="Genomic_DNA"/>
</dbReference>
<dbReference type="PIR" id="F90171">
    <property type="entry name" value="F90171"/>
</dbReference>
<dbReference type="SMR" id="Q980K2"/>
<dbReference type="FunCoup" id="Q980K2">
    <property type="interactions" value="70"/>
</dbReference>
<dbReference type="STRING" id="273057.SSO0291"/>
<dbReference type="PaxDb" id="273057-SSO0291"/>
<dbReference type="EnsemblBacteria" id="AAK40629">
    <property type="protein sequence ID" value="AAK40629"/>
    <property type="gene ID" value="SSO0291"/>
</dbReference>
<dbReference type="KEGG" id="sso:SSO0291"/>
<dbReference type="PATRIC" id="fig|273057.12.peg.284"/>
<dbReference type="eggNOG" id="arCOG00579">
    <property type="taxonomic scope" value="Archaea"/>
</dbReference>
<dbReference type="HOGENOM" id="CLU_093932_3_2_2"/>
<dbReference type="InParanoid" id="Q980K2"/>
<dbReference type="PhylomeDB" id="Q980K2"/>
<dbReference type="Proteomes" id="UP000001974">
    <property type="component" value="Chromosome"/>
</dbReference>
<dbReference type="GO" id="GO:0000428">
    <property type="term" value="C:DNA-directed RNA polymerase complex"/>
    <property type="evidence" value="ECO:0007669"/>
    <property type="project" value="UniProtKB-KW"/>
</dbReference>
<dbReference type="GO" id="GO:0003899">
    <property type="term" value="F:DNA-directed RNA polymerase activity"/>
    <property type="evidence" value="ECO:0007669"/>
    <property type="project" value="InterPro"/>
</dbReference>
<dbReference type="GO" id="GO:0003676">
    <property type="term" value="F:nucleic acid binding"/>
    <property type="evidence" value="ECO:0007669"/>
    <property type="project" value="InterPro"/>
</dbReference>
<dbReference type="GO" id="GO:0008270">
    <property type="term" value="F:zinc ion binding"/>
    <property type="evidence" value="ECO:0007669"/>
    <property type="project" value="UniProtKB-KW"/>
</dbReference>
<dbReference type="GO" id="GO:0006351">
    <property type="term" value="P:DNA-templated transcription"/>
    <property type="evidence" value="ECO:0007669"/>
    <property type="project" value="InterPro"/>
</dbReference>
<dbReference type="GO" id="GO:0045893">
    <property type="term" value="P:positive regulation of DNA-templated transcription"/>
    <property type="evidence" value="ECO:0000314"/>
    <property type="project" value="UniProtKB"/>
</dbReference>
<dbReference type="CDD" id="cd10511">
    <property type="entry name" value="Zn-ribbon_TFS"/>
    <property type="match status" value="1"/>
</dbReference>
<dbReference type="Gene3D" id="2.20.25.10">
    <property type="match status" value="2"/>
</dbReference>
<dbReference type="InterPro" id="IPR019761">
    <property type="entry name" value="DNA-dir_RNA_pol-M_15_CS"/>
</dbReference>
<dbReference type="InterPro" id="IPR012164">
    <property type="entry name" value="Rpa12/Rpb9/Rpc10/TFS"/>
</dbReference>
<dbReference type="InterPro" id="IPR006288">
    <property type="entry name" value="TFS"/>
</dbReference>
<dbReference type="InterPro" id="IPR001529">
    <property type="entry name" value="Zn_ribbon_RPB9"/>
</dbReference>
<dbReference type="InterPro" id="IPR001222">
    <property type="entry name" value="Znf_TFIIS"/>
</dbReference>
<dbReference type="NCBIfam" id="TIGR01384">
    <property type="entry name" value="TFS_arch"/>
    <property type="match status" value="1"/>
</dbReference>
<dbReference type="PANTHER" id="PTHR11239">
    <property type="entry name" value="DNA-DIRECTED RNA POLYMERASE"/>
    <property type="match status" value="1"/>
</dbReference>
<dbReference type="PANTHER" id="PTHR11239:SF12">
    <property type="entry name" value="DNA-DIRECTED RNA POLYMERASE III SUBUNIT RPC10"/>
    <property type="match status" value="1"/>
</dbReference>
<dbReference type="Pfam" id="PF02150">
    <property type="entry name" value="Zn_ribbon_RPB9"/>
    <property type="match status" value="1"/>
</dbReference>
<dbReference type="Pfam" id="PF01096">
    <property type="entry name" value="Zn_ribbon_TFIIS"/>
    <property type="match status" value="1"/>
</dbReference>
<dbReference type="PIRSF" id="PIRSF005586">
    <property type="entry name" value="RNApol_RpoM"/>
    <property type="match status" value="1"/>
</dbReference>
<dbReference type="SMART" id="SM00661">
    <property type="entry name" value="RPOL9"/>
    <property type="match status" value="1"/>
</dbReference>
<dbReference type="SMART" id="SM00440">
    <property type="entry name" value="ZnF_C2C2"/>
    <property type="match status" value="1"/>
</dbReference>
<dbReference type="SUPFAM" id="SSF57783">
    <property type="entry name" value="Zinc beta-ribbon"/>
    <property type="match status" value="2"/>
</dbReference>
<dbReference type="PROSITE" id="PS01030">
    <property type="entry name" value="RNA_POL_M_15KD"/>
    <property type="match status" value="1"/>
</dbReference>
<dbReference type="PROSITE" id="PS00466">
    <property type="entry name" value="ZF_TFIIS_1"/>
    <property type="match status" value="1"/>
</dbReference>
<dbReference type="PROSITE" id="PS51133">
    <property type="entry name" value="ZF_TFIIS_2"/>
    <property type="match status" value="1"/>
</dbReference>
<reference key="1">
    <citation type="journal article" date="2001" name="Proc. Natl. Acad. Sci. U.S.A.">
        <title>The complete genome of the crenarchaeon Sulfolobus solfataricus P2.</title>
        <authorList>
            <person name="She Q."/>
            <person name="Singh R.K."/>
            <person name="Confalonieri F."/>
            <person name="Zivanovic Y."/>
            <person name="Allard G."/>
            <person name="Awayez M.J."/>
            <person name="Chan-Weiher C.C.-Y."/>
            <person name="Clausen I.G."/>
            <person name="Curtis B.A."/>
            <person name="De Moors A."/>
            <person name="Erauso G."/>
            <person name="Fletcher C."/>
            <person name="Gordon P.M.K."/>
            <person name="Heikamp-de Jong I."/>
            <person name="Jeffries A.C."/>
            <person name="Kozera C.J."/>
            <person name="Medina N."/>
            <person name="Peng X."/>
            <person name="Thi-Ngoc H.P."/>
            <person name="Redder P."/>
            <person name="Schenk M.E."/>
            <person name="Theriault C."/>
            <person name="Tolstrup N."/>
            <person name="Charlebois R.L."/>
            <person name="Doolittle W.F."/>
            <person name="Duguet M."/>
            <person name="Gaasterland T."/>
            <person name="Garrett R.A."/>
            <person name="Ragan M.A."/>
            <person name="Sensen C.W."/>
            <person name="Van der Oost J."/>
        </authorList>
    </citation>
    <scope>NUCLEOTIDE SEQUENCE [LARGE SCALE GENOMIC DNA]</scope>
    <source>
        <strain>ATCC 35092 / DSM 1617 / JCM 11322 / P2</strain>
    </source>
</reference>
<reference key="2">
    <citation type="journal article" date="2017" name="Nat. Commun.">
        <title>The transcript cleavage factor paralogue TFS4 is a potent RNA polymerase inhibitor.</title>
        <authorList>
            <person name="Fouqueau T."/>
            <person name="Blombach F."/>
            <person name="Hartman R."/>
            <person name="Cheung A.C.M."/>
            <person name="Young M.J."/>
            <person name="Werner F."/>
        </authorList>
    </citation>
    <scope>FUNCTION IN TRANSCRIPT CLEAVAGE</scope>
    <scope>PROBABLE COFACTOR</scope>
    <scope>SUBUNIT</scope>
    <scope>DOMAIN</scope>
    <scope>ACTIVE SITE</scope>
    <scope>MUTAGENESIS OF 84-TYR--THR-98 AND 94-ASP-GLU-95</scope>
    <source>
        <strain>ATCC 35092 / DSM 1617 / JCM 11322 / P2</strain>
    </source>
</reference>